<reference key="1">
    <citation type="journal article" date="2003" name="Proc. Natl. Acad. Sci. U.S.A.">
        <title>The complete genome sequence of Chromobacterium violaceum reveals remarkable and exploitable bacterial adaptability.</title>
        <authorList>
            <person name="Vasconcelos A.T.R."/>
            <person name="de Almeida D.F."/>
            <person name="Hungria M."/>
            <person name="Guimaraes C.T."/>
            <person name="Antonio R.V."/>
            <person name="Almeida F.C."/>
            <person name="de Almeida L.G.P."/>
            <person name="de Almeida R."/>
            <person name="Alves-Gomes J.A."/>
            <person name="Andrade E.M."/>
            <person name="Araripe J."/>
            <person name="de Araujo M.F.F."/>
            <person name="Astolfi-Filho S."/>
            <person name="Azevedo V."/>
            <person name="Baptista A.J."/>
            <person name="Bataus L.A.M."/>
            <person name="Batista J.S."/>
            <person name="Belo A."/>
            <person name="van den Berg C."/>
            <person name="Bogo M."/>
            <person name="Bonatto S."/>
            <person name="Bordignon J."/>
            <person name="Brigido M.M."/>
            <person name="Brito C.A."/>
            <person name="Brocchi M."/>
            <person name="Burity H.A."/>
            <person name="Camargo A.A."/>
            <person name="Cardoso D.D.P."/>
            <person name="Carneiro N.P."/>
            <person name="Carraro D.M."/>
            <person name="Carvalho C.M.B."/>
            <person name="Cascardo J.C.M."/>
            <person name="Cavada B.S."/>
            <person name="Chueire L.M.O."/>
            <person name="Creczynski-Pasa T.B."/>
            <person name="Cunha-Junior N.C."/>
            <person name="Fagundes N."/>
            <person name="Falcao C.L."/>
            <person name="Fantinatti F."/>
            <person name="Farias I.P."/>
            <person name="Felipe M.S.S."/>
            <person name="Ferrari L.P."/>
            <person name="Ferro J.A."/>
            <person name="Ferro M.I.T."/>
            <person name="Franco G.R."/>
            <person name="Freitas N.S.A."/>
            <person name="Furlan L.R."/>
            <person name="Gazzinelli R.T."/>
            <person name="Gomes E.A."/>
            <person name="Goncalves P.R."/>
            <person name="Grangeiro T.B."/>
            <person name="Grattapaglia D."/>
            <person name="Grisard E.C."/>
            <person name="Hanna E.S."/>
            <person name="Jardim S.N."/>
            <person name="Laurino J."/>
            <person name="Leoi L.C.T."/>
            <person name="Lima L.F.A."/>
            <person name="Loureiro M.F."/>
            <person name="Lyra M.C.C.P."/>
            <person name="Madeira H.M.F."/>
            <person name="Manfio G.P."/>
            <person name="Maranhao A.Q."/>
            <person name="Martins W.S."/>
            <person name="di Mauro S.M.Z."/>
            <person name="de Medeiros S.R.B."/>
            <person name="Meissner R.V."/>
            <person name="Moreira M.A.M."/>
            <person name="Nascimento F.F."/>
            <person name="Nicolas M.F."/>
            <person name="Oliveira J.G."/>
            <person name="Oliveira S.C."/>
            <person name="Paixao R.F.C."/>
            <person name="Parente J.A."/>
            <person name="Pedrosa F.O."/>
            <person name="Pena S.D.J."/>
            <person name="Pereira J.O."/>
            <person name="Pereira M."/>
            <person name="Pinto L.S.R.C."/>
            <person name="Pinto L.S."/>
            <person name="Porto J.I.R."/>
            <person name="Potrich D.P."/>
            <person name="Ramalho-Neto C.E."/>
            <person name="Reis A.M.M."/>
            <person name="Rigo L.U."/>
            <person name="Rondinelli E."/>
            <person name="Santos E.B.P."/>
            <person name="Santos F.R."/>
            <person name="Schneider M.P.C."/>
            <person name="Seuanez H.N."/>
            <person name="Silva A.M.R."/>
            <person name="da Silva A.L.C."/>
            <person name="Silva D.W."/>
            <person name="Silva R."/>
            <person name="Simoes I.C."/>
            <person name="Simon D."/>
            <person name="Soares C.M.A."/>
            <person name="Soares R.B.A."/>
            <person name="Souza E.M."/>
            <person name="Souza K.R.L."/>
            <person name="Souza R.C."/>
            <person name="Steffens M.B.R."/>
            <person name="Steindel M."/>
            <person name="Teixeira S.R."/>
            <person name="Urmenyi T."/>
            <person name="Vettore A."/>
            <person name="Wassem R."/>
            <person name="Zaha A."/>
            <person name="Simpson A.J.G."/>
        </authorList>
    </citation>
    <scope>NUCLEOTIDE SEQUENCE [LARGE SCALE GENOMIC DNA]</scope>
    <source>
        <strain>ATCC 12472 / DSM 30191 / JCM 1249 / CCUG 213 / NBRC 12614 / NCIMB 9131 / NCTC 9757 / MK</strain>
    </source>
</reference>
<sequence length="616" mass="66386">MYPLLENINSPADLRLLPRTQLPQLAGELREFLVESVSKTGGHFASNLGSIELTIALHYVFDTPHDRLVWDVGHQTYPHKILTGRRERMHTMRQHNGLAGFPKREESEYDTFGVGHSSTSIGAALGMAVAAKTLGVDRKSVAIIGDGAMTAGQAFEALNNAGAMDTDLLVILNDNDMSISPNVGALNNYLAKLMSGRFYAAMREGSSKVLGIAPPLKEIASKVEEHVKGFFTPGTLFEEFGFNYIGPIDGHDVDVLVDTLKNIRSLKGPQFLHIVTKKGQGYKLAENDPVKYHGVTKFDPANGLASGKGGAGKPQYTQVFGDWLCDMAKLDKRLVGITPAMREGSGMVRFEKEHPDRYYDVAIAEQHAVTFAGGMACDGLKPVVAIYSTFLQRGYDQLIHDVALQNLPVMFALDRAGLVGADGPTHAGAFDLSYLRCIPNMTVMAPSDENECRQLLYTAFQLDTPTAVRYPRGTGPGAEIQQQMAALPIGKGVVRRRGKQVAILAFGSMVHPALAAAEALDATVADMRFVKPLDAELIRKLAQTHELIVTVEENVVMGGAGSGCGEALQAMGLAVPTLHLGLPDDYVEHGDPALLLSLCGLDAAGIEKSIRERLAG</sequence>
<organism>
    <name type="scientific">Chromobacterium violaceum (strain ATCC 12472 / DSM 30191 / JCM 1249 / CCUG 213 / NBRC 12614 / NCIMB 9131 / NCTC 9757 / MK)</name>
    <dbReference type="NCBI Taxonomy" id="243365"/>
    <lineage>
        <taxon>Bacteria</taxon>
        <taxon>Pseudomonadati</taxon>
        <taxon>Pseudomonadota</taxon>
        <taxon>Betaproteobacteria</taxon>
        <taxon>Neisseriales</taxon>
        <taxon>Chromobacteriaceae</taxon>
        <taxon>Chromobacterium</taxon>
    </lineage>
</organism>
<dbReference type="EC" id="2.2.1.7" evidence="1"/>
<dbReference type="EMBL" id="AE016825">
    <property type="protein sequence ID" value="AAQ60362.1"/>
    <property type="molecule type" value="Genomic_DNA"/>
</dbReference>
<dbReference type="RefSeq" id="WP_011136239.1">
    <property type="nucleotide sequence ID" value="NC_005085.1"/>
</dbReference>
<dbReference type="SMR" id="Q7NUK5"/>
<dbReference type="STRING" id="243365.CV_2692"/>
<dbReference type="KEGG" id="cvi:CV_2692"/>
<dbReference type="eggNOG" id="COG1154">
    <property type="taxonomic scope" value="Bacteria"/>
</dbReference>
<dbReference type="HOGENOM" id="CLU_009227_1_4_4"/>
<dbReference type="OrthoDB" id="9803371at2"/>
<dbReference type="UniPathway" id="UPA00064">
    <property type="reaction ID" value="UER00091"/>
</dbReference>
<dbReference type="Proteomes" id="UP000001424">
    <property type="component" value="Chromosome"/>
</dbReference>
<dbReference type="GO" id="GO:0005829">
    <property type="term" value="C:cytosol"/>
    <property type="evidence" value="ECO:0007669"/>
    <property type="project" value="TreeGrafter"/>
</dbReference>
<dbReference type="GO" id="GO:0008661">
    <property type="term" value="F:1-deoxy-D-xylulose-5-phosphate synthase activity"/>
    <property type="evidence" value="ECO:0007669"/>
    <property type="project" value="UniProtKB-UniRule"/>
</dbReference>
<dbReference type="GO" id="GO:0000287">
    <property type="term" value="F:magnesium ion binding"/>
    <property type="evidence" value="ECO:0007669"/>
    <property type="project" value="UniProtKB-UniRule"/>
</dbReference>
<dbReference type="GO" id="GO:0030976">
    <property type="term" value="F:thiamine pyrophosphate binding"/>
    <property type="evidence" value="ECO:0007669"/>
    <property type="project" value="UniProtKB-UniRule"/>
</dbReference>
<dbReference type="GO" id="GO:0052865">
    <property type="term" value="P:1-deoxy-D-xylulose 5-phosphate biosynthetic process"/>
    <property type="evidence" value="ECO:0007669"/>
    <property type="project" value="UniProtKB-UniPathway"/>
</dbReference>
<dbReference type="GO" id="GO:0019288">
    <property type="term" value="P:isopentenyl diphosphate biosynthetic process, methylerythritol 4-phosphate pathway"/>
    <property type="evidence" value="ECO:0007669"/>
    <property type="project" value="TreeGrafter"/>
</dbReference>
<dbReference type="GO" id="GO:0016114">
    <property type="term" value="P:terpenoid biosynthetic process"/>
    <property type="evidence" value="ECO:0007669"/>
    <property type="project" value="UniProtKB-UniRule"/>
</dbReference>
<dbReference type="GO" id="GO:0009228">
    <property type="term" value="P:thiamine biosynthetic process"/>
    <property type="evidence" value="ECO:0007669"/>
    <property type="project" value="UniProtKB-UniRule"/>
</dbReference>
<dbReference type="CDD" id="cd02007">
    <property type="entry name" value="TPP_DXS"/>
    <property type="match status" value="1"/>
</dbReference>
<dbReference type="CDD" id="cd07033">
    <property type="entry name" value="TPP_PYR_DXS_TK_like"/>
    <property type="match status" value="1"/>
</dbReference>
<dbReference type="FunFam" id="3.40.50.920:FF:000002">
    <property type="entry name" value="1-deoxy-D-xylulose-5-phosphate synthase"/>
    <property type="match status" value="1"/>
</dbReference>
<dbReference type="FunFam" id="3.40.50.970:FF:000005">
    <property type="entry name" value="1-deoxy-D-xylulose-5-phosphate synthase"/>
    <property type="match status" value="1"/>
</dbReference>
<dbReference type="Gene3D" id="3.40.50.920">
    <property type="match status" value="1"/>
</dbReference>
<dbReference type="Gene3D" id="3.40.50.970">
    <property type="match status" value="2"/>
</dbReference>
<dbReference type="HAMAP" id="MF_00315">
    <property type="entry name" value="DXP_synth"/>
    <property type="match status" value="1"/>
</dbReference>
<dbReference type="InterPro" id="IPR005477">
    <property type="entry name" value="Dxylulose-5-P_synthase"/>
</dbReference>
<dbReference type="InterPro" id="IPR029061">
    <property type="entry name" value="THDP-binding"/>
</dbReference>
<dbReference type="InterPro" id="IPR009014">
    <property type="entry name" value="Transketo_C/PFOR_II"/>
</dbReference>
<dbReference type="InterPro" id="IPR005475">
    <property type="entry name" value="Transketolase-like_Pyr-bd"/>
</dbReference>
<dbReference type="InterPro" id="IPR020826">
    <property type="entry name" value="Transketolase_BS"/>
</dbReference>
<dbReference type="InterPro" id="IPR033248">
    <property type="entry name" value="Transketolase_C"/>
</dbReference>
<dbReference type="InterPro" id="IPR049557">
    <property type="entry name" value="Transketolase_CS"/>
</dbReference>
<dbReference type="NCBIfam" id="TIGR00204">
    <property type="entry name" value="dxs"/>
    <property type="match status" value="1"/>
</dbReference>
<dbReference type="NCBIfam" id="NF003933">
    <property type="entry name" value="PRK05444.2-2"/>
    <property type="match status" value="1"/>
</dbReference>
<dbReference type="PANTHER" id="PTHR43322">
    <property type="entry name" value="1-D-DEOXYXYLULOSE 5-PHOSPHATE SYNTHASE-RELATED"/>
    <property type="match status" value="1"/>
</dbReference>
<dbReference type="PANTHER" id="PTHR43322:SF5">
    <property type="entry name" value="1-DEOXY-D-XYLULOSE-5-PHOSPHATE SYNTHASE, CHLOROPLASTIC"/>
    <property type="match status" value="1"/>
</dbReference>
<dbReference type="Pfam" id="PF13292">
    <property type="entry name" value="DXP_synthase_N"/>
    <property type="match status" value="1"/>
</dbReference>
<dbReference type="Pfam" id="PF02779">
    <property type="entry name" value="Transket_pyr"/>
    <property type="match status" value="1"/>
</dbReference>
<dbReference type="Pfam" id="PF02780">
    <property type="entry name" value="Transketolase_C"/>
    <property type="match status" value="1"/>
</dbReference>
<dbReference type="SMART" id="SM00861">
    <property type="entry name" value="Transket_pyr"/>
    <property type="match status" value="1"/>
</dbReference>
<dbReference type="SUPFAM" id="SSF52518">
    <property type="entry name" value="Thiamin diphosphate-binding fold (THDP-binding)"/>
    <property type="match status" value="2"/>
</dbReference>
<dbReference type="SUPFAM" id="SSF52922">
    <property type="entry name" value="TK C-terminal domain-like"/>
    <property type="match status" value="1"/>
</dbReference>
<dbReference type="PROSITE" id="PS00801">
    <property type="entry name" value="TRANSKETOLASE_1"/>
    <property type="match status" value="1"/>
</dbReference>
<dbReference type="PROSITE" id="PS00802">
    <property type="entry name" value="TRANSKETOLASE_2"/>
    <property type="match status" value="1"/>
</dbReference>
<comment type="function">
    <text evidence="1">Catalyzes the acyloin condensation reaction between C atoms 2 and 3 of pyruvate and glyceraldehyde 3-phosphate to yield 1-deoxy-D-xylulose-5-phosphate (DXP).</text>
</comment>
<comment type="catalytic activity">
    <reaction evidence="1">
        <text>D-glyceraldehyde 3-phosphate + pyruvate + H(+) = 1-deoxy-D-xylulose 5-phosphate + CO2</text>
        <dbReference type="Rhea" id="RHEA:12605"/>
        <dbReference type="ChEBI" id="CHEBI:15361"/>
        <dbReference type="ChEBI" id="CHEBI:15378"/>
        <dbReference type="ChEBI" id="CHEBI:16526"/>
        <dbReference type="ChEBI" id="CHEBI:57792"/>
        <dbReference type="ChEBI" id="CHEBI:59776"/>
        <dbReference type="EC" id="2.2.1.7"/>
    </reaction>
</comment>
<comment type="cofactor">
    <cofactor evidence="1">
        <name>Mg(2+)</name>
        <dbReference type="ChEBI" id="CHEBI:18420"/>
    </cofactor>
    <text evidence="1">Binds 1 Mg(2+) ion per subunit.</text>
</comment>
<comment type="cofactor">
    <cofactor evidence="1">
        <name>thiamine diphosphate</name>
        <dbReference type="ChEBI" id="CHEBI:58937"/>
    </cofactor>
    <text evidence="1">Binds 1 thiamine pyrophosphate per subunit.</text>
</comment>
<comment type="pathway">
    <text evidence="1">Metabolic intermediate biosynthesis; 1-deoxy-D-xylulose 5-phosphate biosynthesis; 1-deoxy-D-xylulose 5-phosphate from D-glyceraldehyde 3-phosphate and pyruvate: step 1/1.</text>
</comment>
<comment type="subunit">
    <text evidence="1">Homodimer.</text>
</comment>
<comment type="similarity">
    <text evidence="1">Belongs to the transketolase family. DXPS subfamily.</text>
</comment>
<name>DXS_CHRVO</name>
<gene>
    <name evidence="1" type="primary">dxs</name>
    <name type="ordered locus">CV_2692</name>
</gene>
<protein>
    <recommendedName>
        <fullName evidence="1">1-deoxy-D-xylulose-5-phosphate synthase</fullName>
        <ecNumber evidence="1">2.2.1.7</ecNumber>
    </recommendedName>
    <alternativeName>
        <fullName evidence="1">1-deoxyxylulose-5-phosphate synthase</fullName>
        <shortName evidence="1">DXP synthase</shortName>
        <shortName evidence="1">DXPS</shortName>
    </alternativeName>
</protein>
<proteinExistence type="inferred from homology"/>
<evidence type="ECO:0000255" key="1">
    <source>
        <dbReference type="HAMAP-Rule" id="MF_00315"/>
    </source>
</evidence>
<keyword id="KW-0414">Isoprene biosynthesis</keyword>
<keyword id="KW-0460">Magnesium</keyword>
<keyword id="KW-0479">Metal-binding</keyword>
<keyword id="KW-1185">Reference proteome</keyword>
<keyword id="KW-0784">Thiamine biosynthesis</keyword>
<keyword id="KW-0786">Thiamine pyrophosphate</keyword>
<keyword id="KW-0808">Transferase</keyword>
<feature type="chain" id="PRO_0000189104" description="1-deoxy-D-xylulose-5-phosphate synthase">
    <location>
        <begin position="1"/>
        <end position="616"/>
    </location>
</feature>
<feature type="binding site" evidence="1">
    <location>
        <position position="74"/>
    </location>
    <ligand>
        <name>thiamine diphosphate</name>
        <dbReference type="ChEBI" id="CHEBI:58937"/>
    </ligand>
</feature>
<feature type="binding site" evidence="1">
    <location>
        <begin position="115"/>
        <end position="117"/>
    </location>
    <ligand>
        <name>thiamine diphosphate</name>
        <dbReference type="ChEBI" id="CHEBI:58937"/>
    </ligand>
</feature>
<feature type="binding site" evidence="1">
    <location>
        <position position="146"/>
    </location>
    <ligand>
        <name>Mg(2+)</name>
        <dbReference type="ChEBI" id="CHEBI:18420"/>
    </ligand>
</feature>
<feature type="binding site" evidence="1">
    <location>
        <begin position="147"/>
        <end position="148"/>
    </location>
    <ligand>
        <name>thiamine diphosphate</name>
        <dbReference type="ChEBI" id="CHEBI:58937"/>
    </ligand>
</feature>
<feature type="binding site" evidence="1">
    <location>
        <position position="175"/>
    </location>
    <ligand>
        <name>Mg(2+)</name>
        <dbReference type="ChEBI" id="CHEBI:18420"/>
    </ligand>
</feature>
<feature type="binding site" evidence="1">
    <location>
        <position position="175"/>
    </location>
    <ligand>
        <name>thiamine diphosphate</name>
        <dbReference type="ChEBI" id="CHEBI:58937"/>
    </ligand>
</feature>
<feature type="binding site" evidence="1">
    <location>
        <position position="282"/>
    </location>
    <ligand>
        <name>thiamine diphosphate</name>
        <dbReference type="ChEBI" id="CHEBI:58937"/>
    </ligand>
</feature>
<feature type="binding site" evidence="1">
    <location>
        <position position="365"/>
    </location>
    <ligand>
        <name>thiamine diphosphate</name>
        <dbReference type="ChEBI" id="CHEBI:58937"/>
    </ligand>
</feature>
<accession>Q7NUK5</accession>